<keyword id="KW-1185">Reference proteome</keyword>
<keyword id="KW-0687">Ribonucleoprotein</keyword>
<keyword id="KW-0689">Ribosomal protein</keyword>
<organism>
    <name type="scientific">Desulforamulus reducens (strain ATCC BAA-1160 / DSM 100696 / MI-1)</name>
    <name type="common">Desulfotomaculum reducens</name>
    <dbReference type="NCBI Taxonomy" id="349161"/>
    <lineage>
        <taxon>Bacteria</taxon>
        <taxon>Bacillati</taxon>
        <taxon>Bacillota</taxon>
        <taxon>Clostridia</taxon>
        <taxon>Eubacteriales</taxon>
        <taxon>Peptococcaceae</taxon>
        <taxon>Desulforamulus</taxon>
    </lineage>
</organism>
<protein>
    <recommendedName>
        <fullName evidence="1">Large ribosomal subunit protein bL27</fullName>
    </recommendedName>
    <alternativeName>
        <fullName evidence="3">50S ribosomal protein L27</fullName>
    </alternativeName>
</protein>
<feature type="chain" id="PRO_1000128737" description="Large ribosomal subunit protein bL27">
    <location>
        <begin position="1"/>
        <end position="89"/>
    </location>
</feature>
<feature type="region of interest" description="Disordered" evidence="2">
    <location>
        <begin position="1"/>
        <end position="26"/>
    </location>
</feature>
<feature type="compositionally biased region" description="Basic and acidic residues" evidence="2">
    <location>
        <begin position="12"/>
        <end position="26"/>
    </location>
</feature>
<reference key="1">
    <citation type="submission" date="2007-03" db="EMBL/GenBank/DDBJ databases">
        <title>Complete sequence of Desulfotomaculum reducens MI-1.</title>
        <authorList>
            <consortium name="US DOE Joint Genome Institute"/>
            <person name="Copeland A."/>
            <person name="Lucas S."/>
            <person name="Lapidus A."/>
            <person name="Barry K."/>
            <person name="Detter J.C."/>
            <person name="Glavina del Rio T."/>
            <person name="Hammon N."/>
            <person name="Israni S."/>
            <person name="Dalin E."/>
            <person name="Tice H."/>
            <person name="Pitluck S."/>
            <person name="Sims D."/>
            <person name="Brettin T."/>
            <person name="Bruce D."/>
            <person name="Han C."/>
            <person name="Tapia R."/>
            <person name="Schmutz J."/>
            <person name="Larimer F."/>
            <person name="Land M."/>
            <person name="Hauser L."/>
            <person name="Kyrpides N."/>
            <person name="Kim E."/>
            <person name="Tebo B.M."/>
            <person name="Richardson P."/>
        </authorList>
    </citation>
    <scope>NUCLEOTIDE SEQUENCE [LARGE SCALE GENOMIC DNA]</scope>
    <source>
        <strain>ATCC BAA-1160 / DSM 100696 / MI-1</strain>
    </source>
</reference>
<gene>
    <name evidence="1" type="primary">rpmA</name>
    <name type="ordered locus">Dred_2534</name>
</gene>
<comment type="similarity">
    <text evidence="1">Belongs to the bacterial ribosomal protein bL27 family.</text>
</comment>
<sequence>MAHKKGVGSSRNGRDSESKRLGVKEGDGKFVSAGSILVRQRGTKIYPGDNVGRGGDDTLFAKVDGIVKFERKGRDKKQVSIVVPEVVAQ</sequence>
<dbReference type="EMBL" id="CP000612">
    <property type="protein sequence ID" value="ABO51044.1"/>
    <property type="molecule type" value="Genomic_DNA"/>
</dbReference>
<dbReference type="RefSeq" id="WP_011878842.1">
    <property type="nucleotide sequence ID" value="NC_009253.1"/>
</dbReference>
<dbReference type="SMR" id="A4J7J1"/>
<dbReference type="STRING" id="349161.Dred_2534"/>
<dbReference type="KEGG" id="drm:Dred_2534"/>
<dbReference type="eggNOG" id="COG0211">
    <property type="taxonomic scope" value="Bacteria"/>
</dbReference>
<dbReference type="HOGENOM" id="CLU_095424_4_0_9"/>
<dbReference type="OrthoDB" id="9803474at2"/>
<dbReference type="Proteomes" id="UP000001556">
    <property type="component" value="Chromosome"/>
</dbReference>
<dbReference type="GO" id="GO:0022625">
    <property type="term" value="C:cytosolic large ribosomal subunit"/>
    <property type="evidence" value="ECO:0007669"/>
    <property type="project" value="TreeGrafter"/>
</dbReference>
<dbReference type="GO" id="GO:0003735">
    <property type="term" value="F:structural constituent of ribosome"/>
    <property type="evidence" value="ECO:0007669"/>
    <property type="project" value="InterPro"/>
</dbReference>
<dbReference type="GO" id="GO:0006412">
    <property type="term" value="P:translation"/>
    <property type="evidence" value="ECO:0007669"/>
    <property type="project" value="UniProtKB-UniRule"/>
</dbReference>
<dbReference type="FunFam" id="2.40.50.100:FF:000004">
    <property type="entry name" value="50S ribosomal protein L27"/>
    <property type="match status" value="1"/>
</dbReference>
<dbReference type="Gene3D" id="2.40.50.100">
    <property type="match status" value="1"/>
</dbReference>
<dbReference type="HAMAP" id="MF_00539">
    <property type="entry name" value="Ribosomal_bL27"/>
    <property type="match status" value="1"/>
</dbReference>
<dbReference type="InterPro" id="IPR001684">
    <property type="entry name" value="Ribosomal_bL27"/>
</dbReference>
<dbReference type="InterPro" id="IPR018261">
    <property type="entry name" value="Ribosomal_bL27_CS"/>
</dbReference>
<dbReference type="NCBIfam" id="TIGR00062">
    <property type="entry name" value="L27"/>
    <property type="match status" value="1"/>
</dbReference>
<dbReference type="PANTHER" id="PTHR15893:SF0">
    <property type="entry name" value="LARGE RIBOSOMAL SUBUNIT PROTEIN BL27M"/>
    <property type="match status" value="1"/>
</dbReference>
<dbReference type="PANTHER" id="PTHR15893">
    <property type="entry name" value="RIBOSOMAL PROTEIN L27"/>
    <property type="match status" value="1"/>
</dbReference>
<dbReference type="Pfam" id="PF01016">
    <property type="entry name" value="Ribosomal_L27"/>
    <property type="match status" value="1"/>
</dbReference>
<dbReference type="PRINTS" id="PR00063">
    <property type="entry name" value="RIBOSOMALL27"/>
</dbReference>
<dbReference type="SUPFAM" id="SSF110324">
    <property type="entry name" value="Ribosomal L27 protein-like"/>
    <property type="match status" value="1"/>
</dbReference>
<dbReference type="PROSITE" id="PS00831">
    <property type="entry name" value="RIBOSOMAL_L27"/>
    <property type="match status" value="1"/>
</dbReference>
<evidence type="ECO:0000255" key="1">
    <source>
        <dbReference type="HAMAP-Rule" id="MF_00539"/>
    </source>
</evidence>
<evidence type="ECO:0000256" key="2">
    <source>
        <dbReference type="SAM" id="MobiDB-lite"/>
    </source>
</evidence>
<evidence type="ECO:0000305" key="3"/>
<proteinExistence type="inferred from homology"/>
<name>RL27_DESRM</name>
<accession>A4J7J1</accession>